<proteinExistence type="inferred from homology"/>
<sequence>MQPFISHTGLAVIIDSANVDTDQIIPKQFLSKVTRDGFGVHLFHDWRYLDDAGDQLNPDFTLNKPRYQGASILVSQENFGCGSSREHAPWALADFGLKVIIAPSFADIFYGNSINNGLLPVRLADAEVKQLMAEVEAKEGAEISVDLQALTVTSPSGSQFHFEIAQSARHNLLNGLDAIGLTLSHADTIANYEANIPSWRR</sequence>
<comment type="function">
    <text evidence="1">Catalyzes the isomerization between 2-isopropylmalate and 3-isopropylmalate, via the formation of 2-isopropylmaleate.</text>
</comment>
<comment type="catalytic activity">
    <reaction evidence="1">
        <text>(2R,3S)-3-isopropylmalate = (2S)-2-isopropylmalate</text>
        <dbReference type="Rhea" id="RHEA:32287"/>
        <dbReference type="ChEBI" id="CHEBI:1178"/>
        <dbReference type="ChEBI" id="CHEBI:35121"/>
        <dbReference type="EC" id="4.2.1.33"/>
    </reaction>
</comment>
<comment type="pathway">
    <text evidence="1">Amino-acid biosynthesis; L-leucine biosynthesis; L-leucine from 3-methyl-2-oxobutanoate: step 2/4.</text>
</comment>
<comment type="subunit">
    <text evidence="1">Heterodimer of LeuC and LeuD.</text>
</comment>
<comment type="similarity">
    <text evidence="1">Belongs to the LeuD family. LeuD type 1 subfamily.</text>
</comment>
<feature type="chain" id="PRO_1000084267" description="3-isopropylmalate dehydratase small subunit">
    <location>
        <begin position="1"/>
        <end position="201"/>
    </location>
</feature>
<name>LEUD_SHEPA</name>
<gene>
    <name evidence="1" type="primary">leuD</name>
    <name type="ordered locus">Spea_3825</name>
</gene>
<accession>A8H998</accession>
<reference key="1">
    <citation type="submission" date="2007-10" db="EMBL/GenBank/DDBJ databases">
        <title>Complete sequence of Shewanella pealeana ATCC 700345.</title>
        <authorList>
            <consortium name="US DOE Joint Genome Institute"/>
            <person name="Copeland A."/>
            <person name="Lucas S."/>
            <person name="Lapidus A."/>
            <person name="Barry K."/>
            <person name="Glavina del Rio T."/>
            <person name="Dalin E."/>
            <person name="Tice H."/>
            <person name="Pitluck S."/>
            <person name="Chertkov O."/>
            <person name="Brettin T."/>
            <person name="Bruce D."/>
            <person name="Detter J.C."/>
            <person name="Han C."/>
            <person name="Schmutz J."/>
            <person name="Larimer F."/>
            <person name="Land M."/>
            <person name="Hauser L."/>
            <person name="Kyrpides N."/>
            <person name="Kim E."/>
            <person name="Zhao J.-S.Z."/>
            <person name="Manno D."/>
            <person name="Hawari J."/>
            <person name="Richardson P."/>
        </authorList>
    </citation>
    <scope>NUCLEOTIDE SEQUENCE [LARGE SCALE GENOMIC DNA]</scope>
    <source>
        <strain>ATCC 700345 / ANG-SQ1</strain>
    </source>
</reference>
<organism>
    <name type="scientific">Shewanella pealeana (strain ATCC 700345 / ANG-SQ1)</name>
    <dbReference type="NCBI Taxonomy" id="398579"/>
    <lineage>
        <taxon>Bacteria</taxon>
        <taxon>Pseudomonadati</taxon>
        <taxon>Pseudomonadota</taxon>
        <taxon>Gammaproteobacteria</taxon>
        <taxon>Alteromonadales</taxon>
        <taxon>Shewanellaceae</taxon>
        <taxon>Shewanella</taxon>
    </lineage>
</organism>
<evidence type="ECO:0000255" key="1">
    <source>
        <dbReference type="HAMAP-Rule" id="MF_01031"/>
    </source>
</evidence>
<keyword id="KW-0028">Amino-acid biosynthesis</keyword>
<keyword id="KW-0100">Branched-chain amino acid biosynthesis</keyword>
<keyword id="KW-0432">Leucine biosynthesis</keyword>
<keyword id="KW-0456">Lyase</keyword>
<keyword id="KW-1185">Reference proteome</keyword>
<dbReference type="EC" id="4.2.1.33" evidence="1"/>
<dbReference type="EMBL" id="CP000851">
    <property type="protein sequence ID" value="ABV89135.1"/>
    <property type="molecule type" value="Genomic_DNA"/>
</dbReference>
<dbReference type="RefSeq" id="WP_012157017.1">
    <property type="nucleotide sequence ID" value="NC_009901.1"/>
</dbReference>
<dbReference type="SMR" id="A8H998"/>
<dbReference type="STRING" id="398579.Spea_3825"/>
<dbReference type="KEGG" id="spl:Spea_3825"/>
<dbReference type="eggNOG" id="COG0066">
    <property type="taxonomic scope" value="Bacteria"/>
</dbReference>
<dbReference type="HOGENOM" id="CLU_081378_0_3_6"/>
<dbReference type="OrthoDB" id="9777465at2"/>
<dbReference type="UniPathway" id="UPA00048">
    <property type="reaction ID" value="UER00071"/>
</dbReference>
<dbReference type="Proteomes" id="UP000002608">
    <property type="component" value="Chromosome"/>
</dbReference>
<dbReference type="GO" id="GO:0009316">
    <property type="term" value="C:3-isopropylmalate dehydratase complex"/>
    <property type="evidence" value="ECO:0007669"/>
    <property type="project" value="InterPro"/>
</dbReference>
<dbReference type="GO" id="GO:0003861">
    <property type="term" value="F:3-isopropylmalate dehydratase activity"/>
    <property type="evidence" value="ECO:0007669"/>
    <property type="project" value="UniProtKB-UniRule"/>
</dbReference>
<dbReference type="GO" id="GO:0009098">
    <property type="term" value="P:L-leucine biosynthetic process"/>
    <property type="evidence" value="ECO:0007669"/>
    <property type="project" value="UniProtKB-UniRule"/>
</dbReference>
<dbReference type="CDD" id="cd01577">
    <property type="entry name" value="IPMI_Swivel"/>
    <property type="match status" value="1"/>
</dbReference>
<dbReference type="FunFam" id="3.20.19.10:FF:000003">
    <property type="entry name" value="3-isopropylmalate dehydratase small subunit"/>
    <property type="match status" value="1"/>
</dbReference>
<dbReference type="Gene3D" id="3.20.19.10">
    <property type="entry name" value="Aconitase, domain 4"/>
    <property type="match status" value="1"/>
</dbReference>
<dbReference type="HAMAP" id="MF_01031">
    <property type="entry name" value="LeuD_type1"/>
    <property type="match status" value="1"/>
</dbReference>
<dbReference type="InterPro" id="IPR004431">
    <property type="entry name" value="3-IsopropMal_deHydase_ssu"/>
</dbReference>
<dbReference type="InterPro" id="IPR015928">
    <property type="entry name" value="Aconitase/3IPM_dehydase_swvl"/>
</dbReference>
<dbReference type="InterPro" id="IPR000573">
    <property type="entry name" value="AconitaseA/IPMdHydase_ssu_swvl"/>
</dbReference>
<dbReference type="InterPro" id="IPR033940">
    <property type="entry name" value="IPMI_Swivel"/>
</dbReference>
<dbReference type="InterPro" id="IPR050075">
    <property type="entry name" value="LeuD"/>
</dbReference>
<dbReference type="NCBIfam" id="TIGR00171">
    <property type="entry name" value="leuD"/>
    <property type="match status" value="1"/>
</dbReference>
<dbReference type="NCBIfam" id="NF002458">
    <property type="entry name" value="PRK01641.1"/>
    <property type="match status" value="1"/>
</dbReference>
<dbReference type="PANTHER" id="PTHR43345:SF5">
    <property type="entry name" value="3-ISOPROPYLMALATE DEHYDRATASE SMALL SUBUNIT"/>
    <property type="match status" value="1"/>
</dbReference>
<dbReference type="PANTHER" id="PTHR43345">
    <property type="entry name" value="3-ISOPROPYLMALATE DEHYDRATASE SMALL SUBUNIT 2-RELATED-RELATED"/>
    <property type="match status" value="1"/>
</dbReference>
<dbReference type="Pfam" id="PF00694">
    <property type="entry name" value="Aconitase_C"/>
    <property type="match status" value="1"/>
</dbReference>
<dbReference type="SUPFAM" id="SSF52016">
    <property type="entry name" value="LeuD/IlvD-like"/>
    <property type="match status" value="1"/>
</dbReference>
<protein>
    <recommendedName>
        <fullName evidence="1">3-isopropylmalate dehydratase small subunit</fullName>
        <ecNumber evidence="1">4.2.1.33</ecNumber>
    </recommendedName>
    <alternativeName>
        <fullName evidence="1">Alpha-IPM isomerase</fullName>
        <shortName evidence="1">IPMI</shortName>
    </alternativeName>
    <alternativeName>
        <fullName evidence="1">Isopropylmalate isomerase</fullName>
    </alternativeName>
</protein>